<accession>O51625</accession>
<gene>
    <name evidence="1" type="primary">mnmA</name>
    <name type="synonym">trmU</name>
    <name type="ordered locus">BB_0682</name>
</gene>
<name>MNMA_BORBU</name>
<sequence>MKIAVLLSGGVDSSVALYRIINKGYSNIKCYYLKIWVEDELSYIGNCPWQEDLNYVEAICNKFNVPYEIINFQKEYYNKVVSYTIEELKNGNTPSPDIFCNQRIKFGAFFEKINSQYDLVVTGHYAKIQIKESKFLLKQAKDKIKDQSYFLSHLSQKQMSKLYFPLGTLLKSEVRQIAKNINLPNKDRKDSQGICFLGKIKYNEFIKYHLGEKKGNIIEKETGKIIGIHNGYWFFTVGQRRGIKLSNGPWFVIEKDLEKNIIYISHNENYLKQAKRKFLVHEIHWINDTPTNFENFKIKIRHGEKKYSCKLKLITNNLMEISLNKKDQGISPGQFAIFYKNTECLGGAKIFKIIE</sequence>
<feature type="chain" id="PRO_0000121610" description="tRNA-specific 2-thiouridylase MnmA">
    <location>
        <begin position="1"/>
        <end position="355"/>
    </location>
</feature>
<feature type="region of interest" description="Interaction with tRNA" evidence="1">
    <location>
        <begin position="145"/>
        <end position="147"/>
    </location>
</feature>
<feature type="active site" description="Nucleophile" evidence="1">
    <location>
        <position position="100"/>
    </location>
</feature>
<feature type="active site" description="Cysteine persulfide intermediate" evidence="1">
    <location>
        <position position="195"/>
    </location>
</feature>
<feature type="binding site" evidence="1">
    <location>
        <begin position="6"/>
        <end position="13"/>
    </location>
    <ligand>
        <name>ATP</name>
        <dbReference type="ChEBI" id="CHEBI:30616"/>
    </ligand>
</feature>
<feature type="binding site" evidence="1">
    <location>
        <position position="33"/>
    </location>
    <ligand>
        <name>ATP</name>
        <dbReference type="ChEBI" id="CHEBI:30616"/>
    </ligand>
</feature>
<feature type="binding site" evidence="1">
    <location>
        <position position="123"/>
    </location>
    <ligand>
        <name>ATP</name>
        <dbReference type="ChEBI" id="CHEBI:30616"/>
    </ligand>
</feature>
<feature type="site" description="Interaction with tRNA" evidence="1">
    <location>
        <position position="124"/>
    </location>
</feature>
<feature type="site" description="Interaction with tRNA" evidence="1">
    <location>
        <position position="334"/>
    </location>
</feature>
<feature type="disulfide bond" description="Alternate" evidence="1">
    <location>
        <begin position="100"/>
        <end position="195"/>
    </location>
</feature>
<dbReference type="EC" id="2.8.1.13" evidence="1"/>
<dbReference type="EMBL" id="AE000783">
    <property type="protein sequence ID" value="AAC67035.1"/>
    <property type="molecule type" value="Genomic_DNA"/>
</dbReference>
<dbReference type="PIR" id="A70185">
    <property type="entry name" value="A70185"/>
</dbReference>
<dbReference type="RefSeq" id="NP_212816.1">
    <property type="nucleotide sequence ID" value="NC_001318.1"/>
</dbReference>
<dbReference type="RefSeq" id="WP_002657419.1">
    <property type="nucleotide sequence ID" value="NC_001318.1"/>
</dbReference>
<dbReference type="SMR" id="O51625"/>
<dbReference type="STRING" id="224326.BB_0682"/>
<dbReference type="PaxDb" id="224326-BB_0682"/>
<dbReference type="EnsemblBacteria" id="AAC67035">
    <property type="protein sequence ID" value="AAC67035"/>
    <property type="gene ID" value="BB_0682"/>
</dbReference>
<dbReference type="GeneID" id="56567492"/>
<dbReference type="KEGG" id="bbu:BB_0682"/>
<dbReference type="PATRIC" id="fig|224326.49.peg.1073"/>
<dbReference type="HOGENOM" id="CLU_035188_1_0_12"/>
<dbReference type="OrthoDB" id="9800696at2"/>
<dbReference type="Proteomes" id="UP000001807">
    <property type="component" value="Chromosome"/>
</dbReference>
<dbReference type="GO" id="GO:0005737">
    <property type="term" value="C:cytoplasm"/>
    <property type="evidence" value="ECO:0007669"/>
    <property type="project" value="UniProtKB-SubCell"/>
</dbReference>
<dbReference type="GO" id="GO:0005524">
    <property type="term" value="F:ATP binding"/>
    <property type="evidence" value="ECO:0007669"/>
    <property type="project" value="UniProtKB-KW"/>
</dbReference>
<dbReference type="GO" id="GO:0000049">
    <property type="term" value="F:tRNA binding"/>
    <property type="evidence" value="ECO:0007669"/>
    <property type="project" value="UniProtKB-KW"/>
</dbReference>
<dbReference type="GO" id="GO:0103016">
    <property type="term" value="F:tRNA-uridine 2-sulfurtransferase activity"/>
    <property type="evidence" value="ECO:0007669"/>
    <property type="project" value="UniProtKB-EC"/>
</dbReference>
<dbReference type="GO" id="GO:0006400">
    <property type="term" value="P:tRNA modification"/>
    <property type="evidence" value="ECO:0007669"/>
    <property type="project" value="UniProtKB-UniRule"/>
</dbReference>
<dbReference type="CDD" id="cd01998">
    <property type="entry name" value="MnmA_TRMU-like"/>
    <property type="match status" value="1"/>
</dbReference>
<dbReference type="FunFam" id="2.30.30.280:FF:000001">
    <property type="entry name" value="tRNA-specific 2-thiouridylase MnmA"/>
    <property type="match status" value="1"/>
</dbReference>
<dbReference type="Gene3D" id="2.30.30.280">
    <property type="entry name" value="Adenine nucleotide alpha hydrolases-like domains"/>
    <property type="match status" value="1"/>
</dbReference>
<dbReference type="Gene3D" id="3.40.50.620">
    <property type="entry name" value="HUPs"/>
    <property type="match status" value="1"/>
</dbReference>
<dbReference type="Gene3D" id="2.40.30.10">
    <property type="entry name" value="Translation factors"/>
    <property type="match status" value="1"/>
</dbReference>
<dbReference type="HAMAP" id="MF_00144">
    <property type="entry name" value="tRNA_thiouridyl_MnmA"/>
    <property type="match status" value="1"/>
</dbReference>
<dbReference type="InterPro" id="IPR004506">
    <property type="entry name" value="MnmA-like"/>
</dbReference>
<dbReference type="InterPro" id="IPR046885">
    <property type="entry name" value="MnmA-like_C"/>
</dbReference>
<dbReference type="InterPro" id="IPR046884">
    <property type="entry name" value="MnmA-like_central"/>
</dbReference>
<dbReference type="InterPro" id="IPR023382">
    <property type="entry name" value="MnmA-like_central_sf"/>
</dbReference>
<dbReference type="InterPro" id="IPR014729">
    <property type="entry name" value="Rossmann-like_a/b/a_fold"/>
</dbReference>
<dbReference type="InterPro" id="IPR051305">
    <property type="entry name" value="tRNA_2-thiouridylase_MnmA"/>
</dbReference>
<dbReference type="NCBIfam" id="NF001138">
    <property type="entry name" value="PRK00143.1"/>
    <property type="match status" value="1"/>
</dbReference>
<dbReference type="NCBIfam" id="TIGR00420">
    <property type="entry name" value="trmU"/>
    <property type="match status" value="1"/>
</dbReference>
<dbReference type="PANTHER" id="PTHR43052">
    <property type="match status" value="1"/>
</dbReference>
<dbReference type="PANTHER" id="PTHR43052:SF1">
    <property type="entry name" value="TRNA-5-TAURINOMETHYLURIDINE 2-SULFURTRANSFERASE"/>
    <property type="match status" value="1"/>
</dbReference>
<dbReference type="Pfam" id="PF03054">
    <property type="entry name" value="tRNA_Me_trans"/>
    <property type="match status" value="1"/>
</dbReference>
<dbReference type="Pfam" id="PF20258">
    <property type="entry name" value="tRNA_Me_trans_C"/>
    <property type="match status" value="1"/>
</dbReference>
<dbReference type="Pfam" id="PF20259">
    <property type="entry name" value="tRNA_Me_trans_M"/>
    <property type="match status" value="1"/>
</dbReference>
<dbReference type="SUPFAM" id="SSF52402">
    <property type="entry name" value="Adenine nucleotide alpha hydrolases-like"/>
    <property type="match status" value="1"/>
</dbReference>
<protein>
    <recommendedName>
        <fullName evidence="1">tRNA-specific 2-thiouridylase MnmA</fullName>
        <ecNumber evidence="1">2.8.1.13</ecNumber>
    </recommendedName>
</protein>
<keyword id="KW-0067">ATP-binding</keyword>
<keyword id="KW-0963">Cytoplasm</keyword>
<keyword id="KW-1015">Disulfide bond</keyword>
<keyword id="KW-0547">Nucleotide-binding</keyword>
<keyword id="KW-1185">Reference proteome</keyword>
<keyword id="KW-0694">RNA-binding</keyword>
<keyword id="KW-0808">Transferase</keyword>
<keyword id="KW-0819">tRNA processing</keyword>
<keyword id="KW-0820">tRNA-binding</keyword>
<proteinExistence type="inferred from homology"/>
<evidence type="ECO:0000255" key="1">
    <source>
        <dbReference type="HAMAP-Rule" id="MF_00144"/>
    </source>
</evidence>
<comment type="function">
    <text evidence="1">Catalyzes the 2-thiolation of uridine at the wobble position (U34) of tRNA, leading to the formation of s(2)U34.</text>
</comment>
<comment type="catalytic activity">
    <reaction evidence="1">
        <text>S-sulfanyl-L-cysteinyl-[protein] + uridine(34) in tRNA + AH2 + ATP = 2-thiouridine(34) in tRNA + L-cysteinyl-[protein] + A + AMP + diphosphate + H(+)</text>
        <dbReference type="Rhea" id="RHEA:47032"/>
        <dbReference type="Rhea" id="RHEA-COMP:10131"/>
        <dbReference type="Rhea" id="RHEA-COMP:11726"/>
        <dbReference type="Rhea" id="RHEA-COMP:11727"/>
        <dbReference type="Rhea" id="RHEA-COMP:11728"/>
        <dbReference type="ChEBI" id="CHEBI:13193"/>
        <dbReference type="ChEBI" id="CHEBI:15378"/>
        <dbReference type="ChEBI" id="CHEBI:17499"/>
        <dbReference type="ChEBI" id="CHEBI:29950"/>
        <dbReference type="ChEBI" id="CHEBI:30616"/>
        <dbReference type="ChEBI" id="CHEBI:33019"/>
        <dbReference type="ChEBI" id="CHEBI:61963"/>
        <dbReference type="ChEBI" id="CHEBI:65315"/>
        <dbReference type="ChEBI" id="CHEBI:87170"/>
        <dbReference type="ChEBI" id="CHEBI:456215"/>
        <dbReference type="EC" id="2.8.1.13"/>
    </reaction>
</comment>
<comment type="subcellular location">
    <subcellularLocation>
        <location evidence="1">Cytoplasm</location>
    </subcellularLocation>
</comment>
<comment type="similarity">
    <text evidence="1">Belongs to the MnmA/TRMU family.</text>
</comment>
<organism>
    <name type="scientific">Borreliella burgdorferi (strain ATCC 35210 / DSM 4680 / CIP 102532 / B31)</name>
    <name type="common">Borrelia burgdorferi</name>
    <dbReference type="NCBI Taxonomy" id="224326"/>
    <lineage>
        <taxon>Bacteria</taxon>
        <taxon>Pseudomonadati</taxon>
        <taxon>Spirochaetota</taxon>
        <taxon>Spirochaetia</taxon>
        <taxon>Spirochaetales</taxon>
        <taxon>Borreliaceae</taxon>
        <taxon>Borreliella</taxon>
    </lineage>
</organism>
<reference key="1">
    <citation type="journal article" date="1997" name="Nature">
        <title>Genomic sequence of a Lyme disease spirochaete, Borrelia burgdorferi.</title>
        <authorList>
            <person name="Fraser C.M."/>
            <person name="Casjens S."/>
            <person name="Huang W.M."/>
            <person name="Sutton G.G."/>
            <person name="Clayton R.A."/>
            <person name="Lathigra R."/>
            <person name="White O."/>
            <person name="Ketchum K.A."/>
            <person name="Dodson R.J."/>
            <person name="Hickey E.K."/>
            <person name="Gwinn M.L."/>
            <person name="Dougherty B.A."/>
            <person name="Tomb J.-F."/>
            <person name="Fleischmann R.D."/>
            <person name="Richardson D.L."/>
            <person name="Peterson J.D."/>
            <person name="Kerlavage A.R."/>
            <person name="Quackenbush J."/>
            <person name="Salzberg S.L."/>
            <person name="Hanson M."/>
            <person name="van Vugt R."/>
            <person name="Palmer N."/>
            <person name="Adams M.D."/>
            <person name="Gocayne J.D."/>
            <person name="Weidman J.F."/>
            <person name="Utterback T.R."/>
            <person name="Watthey L."/>
            <person name="McDonald L.A."/>
            <person name="Artiach P."/>
            <person name="Bowman C."/>
            <person name="Garland S.A."/>
            <person name="Fujii C."/>
            <person name="Cotton M.D."/>
            <person name="Horst K."/>
            <person name="Roberts K.M."/>
            <person name="Hatch B."/>
            <person name="Smith H.O."/>
            <person name="Venter J.C."/>
        </authorList>
    </citation>
    <scope>NUCLEOTIDE SEQUENCE [LARGE SCALE GENOMIC DNA]</scope>
    <source>
        <strain>ATCC 35210 / DSM 4680 / CIP 102532 / B31</strain>
    </source>
</reference>